<proteinExistence type="inferred from homology"/>
<keyword id="KW-0963">Cytoplasm</keyword>
<keyword id="KW-0489">Methyltransferase</keyword>
<keyword id="KW-0698">rRNA processing</keyword>
<keyword id="KW-0949">S-adenosyl-L-methionine</keyword>
<keyword id="KW-0808">Transferase</keyword>
<reference key="1">
    <citation type="journal article" date="2009" name="BMC Genomics">
        <title>Analysis of the Rickettsia africae genome reveals that virulence acquisition in Rickettsia species may be explained by genome reduction.</title>
        <authorList>
            <person name="Fournier P.-E."/>
            <person name="El Karkouri K."/>
            <person name="Leroy Q."/>
            <person name="Robert C."/>
            <person name="Giumelli B."/>
            <person name="Renesto P."/>
            <person name="Socolovschi C."/>
            <person name="Parola P."/>
            <person name="Audic S."/>
            <person name="Raoult D."/>
        </authorList>
    </citation>
    <scope>NUCLEOTIDE SEQUENCE [LARGE SCALE GENOMIC DNA]</scope>
    <source>
        <strain>ESF-5</strain>
    </source>
</reference>
<organism>
    <name type="scientific">Rickettsia africae (strain ESF-5)</name>
    <dbReference type="NCBI Taxonomy" id="347255"/>
    <lineage>
        <taxon>Bacteria</taxon>
        <taxon>Pseudomonadati</taxon>
        <taxon>Pseudomonadota</taxon>
        <taxon>Alphaproteobacteria</taxon>
        <taxon>Rickettsiales</taxon>
        <taxon>Rickettsiaceae</taxon>
        <taxon>Rickettsieae</taxon>
        <taxon>Rickettsia</taxon>
        <taxon>spotted fever group</taxon>
    </lineage>
</organism>
<name>RSMG_RICAE</name>
<protein>
    <recommendedName>
        <fullName evidence="1">Ribosomal RNA small subunit methyltransferase G</fullName>
        <ecNumber evidence="1">2.1.1.170</ecNumber>
    </recommendedName>
    <alternativeName>
        <fullName evidence="1">16S rRNA 7-methylguanosine methyltransferase</fullName>
        <shortName evidence="1">16S rRNA m7G methyltransferase</shortName>
    </alternativeName>
</protein>
<comment type="function">
    <text evidence="1">Specifically methylates the N7 position of guanine in position 527 of 16S rRNA.</text>
</comment>
<comment type="catalytic activity">
    <reaction evidence="1">
        <text>guanosine(527) in 16S rRNA + S-adenosyl-L-methionine = N(7)-methylguanosine(527) in 16S rRNA + S-adenosyl-L-homocysteine</text>
        <dbReference type="Rhea" id="RHEA:42732"/>
        <dbReference type="Rhea" id="RHEA-COMP:10209"/>
        <dbReference type="Rhea" id="RHEA-COMP:10210"/>
        <dbReference type="ChEBI" id="CHEBI:57856"/>
        <dbReference type="ChEBI" id="CHEBI:59789"/>
        <dbReference type="ChEBI" id="CHEBI:74269"/>
        <dbReference type="ChEBI" id="CHEBI:74480"/>
        <dbReference type="EC" id="2.1.1.170"/>
    </reaction>
</comment>
<comment type="subcellular location">
    <subcellularLocation>
        <location evidence="1">Cytoplasm</location>
    </subcellularLocation>
</comment>
<comment type="similarity">
    <text evidence="1">Belongs to the methyltransferase superfamily. RNA methyltransferase RsmG family.</text>
</comment>
<dbReference type="EC" id="2.1.1.170" evidence="1"/>
<dbReference type="EMBL" id="CP001612">
    <property type="protein sequence ID" value="ACP53055.1"/>
    <property type="molecule type" value="Genomic_DNA"/>
</dbReference>
<dbReference type="SMR" id="C3PM95"/>
<dbReference type="KEGG" id="raf:RAF_ORF0080"/>
<dbReference type="HOGENOM" id="CLU_065341_1_1_5"/>
<dbReference type="Proteomes" id="UP000002305">
    <property type="component" value="Chromosome"/>
</dbReference>
<dbReference type="GO" id="GO:0005829">
    <property type="term" value="C:cytosol"/>
    <property type="evidence" value="ECO:0007669"/>
    <property type="project" value="TreeGrafter"/>
</dbReference>
<dbReference type="GO" id="GO:0070043">
    <property type="term" value="F:rRNA (guanine-N7-)-methyltransferase activity"/>
    <property type="evidence" value="ECO:0007669"/>
    <property type="project" value="UniProtKB-UniRule"/>
</dbReference>
<dbReference type="Gene3D" id="3.40.50.150">
    <property type="entry name" value="Vaccinia Virus protein VP39"/>
    <property type="match status" value="1"/>
</dbReference>
<dbReference type="HAMAP" id="MF_00074">
    <property type="entry name" value="16SrRNA_methyltr_G"/>
    <property type="match status" value="1"/>
</dbReference>
<dbReference type="InterPro" id="IPR003682">
    <property type="entry name" value="rRNA_ssu_MeTfrase_G"/>
</dbReference>
<dbReference type="InterPro" id="IPR029063">
    <property type="entry name" value="SAM-dependent_MTases_sf"/>
</dbReference>
<dbReference type="NCBIfam" id="TIGR00138">
    <property type="entry name" value="rsmG_gidB"/>
    <property type="match status" value="1"/>
</dbReference>
<dbReference type="PANTHER" id="PTHR31760">
    <property type="entry name" value="S-ADENOSYL-L-METHIONINE-DEPENDENT METHYLTRANSFERASES SUPERFAMILY PROTEIN"/>
    <property type="match status" value="1"/>
</dbReference>
<dbReference type="PANTHER" id="PTHR31760:SF0">
    <property type="entry name" value="S-ADENOSYL-L-METHIONINE-DEPENDENT METHYLTRANSFERASES SUPERFAMILY PROTEIN"/>
    <property type="match status" value="1"/>
</dbReference>
<dbReference type="Pfam" id="PF02527">
    <property type="entry name" value="GidB"/>
    <property type="match status" value="1"/>
</dbReference>
<dbReference type="PIRSF" id="PIRSF003078">
    <property type="entry name" value="GidB"/>
    <property type="match status" value="1"/>
</dbReference>
<dbReference type="SUPFAM" id="SSF53335">
    <property type="entry name" value="S-adenosyl-L-methionine-dependent methyltransferases"/>
    <property type="match status" value="1"/>
</dbReference>
<evidence type="ECO:0000255" key="1">
    <source>
        <dbReference type="HAMAP-Rule" id="MF_00074"/>
    </source>
</evidence>
<feature type="chain" id="PRO_1000202505" description="Ribosomal RNA small subunit methyltransferase G">
    <location>
        <begin position="1"/>
        <end position="192"/>
    </location>
</feature>
<feature type="binding site" evidence="1">
    <location>
        <position position="63"/>
    </location>
    <ligand>
        <name>S-adenosyl-L-methionine</name>
        <dbReference type="ChEBI" id="CHEBI:59789"/>
    </ligand>
</feature>
<feature type="binding site" evidence="1">
    <location>
        <position position="68"/>
    </location>
    <ligand>
        <name>S-adenosyl-L-methionine</name>
        <dbReference type="ChEBI" id="CHEBI:59789"/>
    </ligand>
</feature>
<feature type="binding site" evidence="1">
    <location>
        <begin position="112"/>
        <end position="113"/>
    </location>
    <ligand>
        <name>S-adenosyl-L-methionine</name>
        <dbReference type="ChEBI" id="CHEBI:59789"/>
    </ligand>
</feature>
<feature type="binding site" evidence="1">
    <location>
        <position position="125"/>
    </location>
    <ligand>
        <name>S-adenosyl-L-methionine</name>
        <dbReference type="ChEBI" id="CHEBI:59789"/>
    </ligand>
</feature>
<accession>C3PM95</accession>
<sequence>MMEVPREIIEKLEIFQKLVKKWNKSINLVSDNTIHNFWQRHILDSLQLIQYIDNKEIHLVDIGSGSGLPGIVLSIAGVAQVSLIEADLRKCIFLEKASKISNNNIQIINQRIEKVEIDCSILTCRAFSNLNTIFNCIKNISVREKFLLLKGKNYLTEIVEAKERWLFGYLIHQSITCEEGKILEVSNLTKMI</sequence>
<gene>
    <name evidence="1" type="primary">rsmG</name>
    <name type="ordered locus">RAF_ORF0080</name>
</gene>